<sequence>AIVSLVKSDQICIGYHANNSTEQVDTIMEKNVTVTHAQDILEKTHNGKLCDLDGVKPLILRDCSVAGWLLGNPMCDEFINVPEWSYIVEKASPANDLCYPGDFNDYEELKHLLSGINHFDKIHIIPKSSWSNHEASSWVSSACPYQGKSSFFRNVVWLIKKNSSYPTIKRSYDNTNQEDLLVLWGIHHPNDAAEQTRFYQNPTTYIGVGTSTLNQRLVPKIATTSKVDGQSGRMEFFWTILKPNDAINFESNGNFIAPEYAYKIVKKGDSAIMKSELEYGNCNTKCQTPMGAINSSMPFHNIHPLTIGECPKYVKSNRLVLATGLRNSPQRERRRKKRGLFGAIAGFIEGGWQGMVDGWYGYHHSNEQGSGYAADKESTQKAIDGVTNKVNSIIDKMNTQFEAVGREFNNLERRIENLNKKMEDGFLDVWTYNAELLVLMENERTLDFHDSNVKNLYDKVRLQLRDNAKELGNGCFEFYHKCDNECMESVRNGTYDYPQYSEEARLKREEISGVKLESIGTYQILSIYSTVASSLALAIMVAGLSLWMCSNGSLQCRIC</sequence>
<reference key="1">
    <citation type="journal article" date="2004" name="Nature">
        <title>Genesis of a highly pathogenic and potentially pandemic H5N1 influenza virus in eastern Asia.</title>
        <authorList>
            <person name="Li K.S."/>
            <person name="Guan Y."/>
            <person name="Wang J."/>
            <person name="Smith G.J.D."/>
            <person name="Xu K.M."/>
            <person name="Duan L."/>
            <person name="Rahardjo A.P."/>
            <person name="Puthavathana P."/>
            <person name="Buranathai C."/>
            <person name="Nguyen T.D."/>
            <person name="Estoepangestie A.T.S."/>
            <person name="Chaisingh A."/>
            <person name="Auewarakul P."/>
            <person name="Long H.T."/>
            <person name="Hanh N.T.H."/>
            <person name="Webby R.J."/>
            <person name="Poon L.L.M."/>
            <person name="Chen H."/>
            <person name="Shortridge K.F."/>
            <person name="Yuen K.Y."/>
            <person name="Webster R.G."/>
            <person name="Peiris J.S.M."/>
        </authorList>
    </citation>
    <scope>NUCLEOTIDE SEQUENCE [GENOMIC RNA]</scope>
</reference>
<organismHost>
    <name type="scientific">Aves</name>
    <dbReference type="NCBI Taxonomy" id="8782"/>
</organismHost>
<organismHost>
    <name type="scientific">Felis catus</name>
    <name type="common">Cat</name>
    <name type="synonym">Felis silvestris catus</name>
    <dbReference type="NCBI Taxonomy" id="9685"/>
</organismHost>
<organismHost>
    <name type="scientific">Homo sapiens</name>
    <name type="common">Human</name>
    <dbReference type="NCBI Taxonomy" id="9606"/>
</organismHost>
<organismHost>
    <name type="scientific">Panthera pardus</name>
    <name type="common">Leopard</name>
    <name type="synonym">Felis pardus</name>
    <dbReference type="NCBI Taxonomy" id="9691"/>
</organismHost>
<organismHost>
    <name type="scientific">Panthera tigris</name>
    <name type="common">Tiger</name>
    <dbReference type="NCBI Taxonomy" id="9694"/>
</organismHost>
<organismHost>
    <name type="scientific">Sus scrofa</name>
    <name type="common">Pig</name>
    <dbReference type="NCBI Taxonomy" id="9823"/>
</organismHost>
<organism>
    <name type="scientific">Influenza A virus (strain A/Chicken/Hong Kong/YU22/2002 H5N1 genotype Z)</name>
    <dbReference type="NCBI Taxonomy" id="284177"/>
    <lineage>
        <taxon>Viruses</taxon>
        <taxon>Riboviria</taxon>
        <taxon>Orthornavirae</taxon>
        <taxon>Negarnaviricota</taxon>
        <taxon>Polyploviricotina</taxon>
        <taxon>Insthoviricetes</taxon>
        <taxon>Articulavirales</taxon>
        <taxon>Orthomyxoviridae</taxon>
        <taxon>Alphainfluenzavirus</taxon>
        <taxon>Alphainfluenzavirus influenzae</taxon>
        <taxon>Influenza A virus</taxon>
    </lineage>
</organism>
<name>HEMA_I02A6</name>
<keyword id="KW-0002">3D-structure</keyword>
<keyword id="KW-1167">Clathrin- and caveolin-independent endocytosis of virus by host</keyword>
<keyword id="KW-1165">Clathrin-mediated endocytosis of virus by host</keyword>
<keyword id="KW-1015">Disulfide bond</keyword>
<keyword id="KW-1170">Fusion of virus membrane with host endosomal membrane</keyword>
<keyword id="KW-1168">Fusion of virus membrane with host membrane</keyword>
<keyword id="KW-0325">Glycoprotein</keyword>
<keyword id="KW-0348">Hemagglutinin</keyword>
<keyword id="KW-1032">Host cell membrane</keyword>
<keyword id="KW-1043">Host membrane</keyword>
<keyword id="KW-0945">Host-virus interaction</keyword>
<keyword id="KW-0449">Lipoprotein</keyword>
<keyword id="KW-0472">Membrane</keyword>
<keyword id="KW-0564">Palmitate</keyword>
<keyword id="KW-0812">Transmembrane</keyword>
<keyword id="KW-1133">Transmembrane helix</keyword>
<keyword id="KW-1161">Viral attachment to host cell</keyword>
<keyword id="KW-0261">Viral envelope protein</keyword>
<keyword id="KW-1162">Viral penetration into host cytoplasm</keyword>
<keyword id="KW-0946">Virion</keyword>
<keyword id="KW-1164">Virus endocytosis by host</keyword>
<keyword id="KW-1160">Virus entry into host cell</keyword>
<dbReference type="EMBL" id="AY651349">
    <property type="protein sequence ID" value="AAT73289.1"/>
    <property type="molecule type" value="Genomic_RNA"/>
</dbReference>
<dbReference type="PDB" id="5JW4">
    <property type="method" value="X-ray"/>
    <property type="resolution" value="3.70 A"/>
    <property type="chains" value="B/D/F/H/J/L=339-500"/>
</dbReference>
<dbReference type="PDB" id="6CF5">
    <property type="method" value="X-ray"/>
    <property type="resolution" value="2.04 A"/>
    <property type="chains" value="B/D/F=339-512"/>
</dbReference>
<dbReference type="PDB" id="6CFG">
    <property type="method" value="X-ray"/>
    <property type="resolution" value="2.32 A"/>
    <property type="chains" value="B=339-512"/>
</dbReference>
<dbReference type="PDB" id="6E3H">
    <property type="method" value="X-ray"/>
    <property type="resolution" value="2.90 A"/>
    <property type="chains" value="B=339-512"/>
</dbReference>
<dbReference type="PDB" id="6E7G">
    <property type="method" value="X-ray"/>
    <property type="resolution" value="3.09 A"/>
    <property type="chains" value="B/D/F=339-512"/>
</dbReference>
<dbReference type="PDB" id="6E7H">
    <property type="method" value="X-ray"/>
    <property type="resolution" value="3.30 A"/>
    <property type="chains" value="B/D/F=339-512"/>
</dbReference>
<dbReference type="PDBsum" id="5JW4"/>
<dbReference type="PDBsum" id="6CF5"/>
<dbReference type="PDBsum" id="6CFG"/>
<dbReference type="PDBsum" id="6E3H"/>
<dbReference type="PDBsum" id="6E7G"/>
<dbReference type="PDBsum" id="6E7H"/>
<dbReference type="SMR" id="Q6DQ18"/>
<dbReference type="GlyCosmos" id="Q6DQ18">
    <property type="glycosylation" value="6 sites, No reported glycans"/>
</dbReference>
<dbReference type="GO" id="GO:0020002">
    <property type="term" value="C:host cell plasma membrane"/>
    <property type="evidence" value="ECO:0007669"/>
    <property type="project" value="UniProtKB-SubCell"/>
</dbReference>
<dbReference type="GO" id="GO:0016020">
    <property type="term" value="C:membrane"/>
    <property type="evidence" value="ECO:0007669"/>
    <property type="project" value="UniProtKB-KW"/>
</dbReference>
<dbReference type="GO" id="GO:0019031">
    <property type="term" value="C:viral envelope"/>
    <property type="evidence" value="ECO:0007669"/>
    <property type="project" value="UniProtKB-KW"/>
</dbReference>
<dbReference type="GO" id="GO:0055036">
    <property type="term" value="C:virion membrane"/>
    <property type="evidence" value="ECO:0007669"/>
    <property type="project" value="UniProtKB-SubCell"/>
</dbReference>
<dbReference type="GO" id="GO:0046789">
    <property type="term" value="F:host cell surface receptor binding"/>
    <property type="evidence" value="ECO:0007669"/>
    <property type="project" value="InterPro"/>
</dbReference>
<dbReference type="GO" id="GO:0075512">
    <property type="term" value="P:clathrin-dependent endocytosis of virus by host cell"/>
    <property type="evidence" value="ECO:0007669"/>
    <property type="project" value="UniProtKB-KW"/>
</dbReference>
<dbReference type="GO" id="GO:0039654">
    <property type="term" value="P:fusion of virus membrane with host endosome membrane"/>
    <property type="evidence" value="ECO:0007669"/>
    <property type="project" value="UniProtKB-KW"/>
</dbReference>
<dbReference type="GO" id="GO:0019064">
    <property type="term" value="P:fusion of virus membrane with host plasma membrane"/>
    <property type="evidence" value="ECO:0007669"/>
    <property type="project" value="InterPro"/>
</dbReference>
<dbReference type="GO" id="GO:0019062">
    <property type="term" value="P:virion attachment to host cell"/>
    <property type="evidence" value="ECO:0007669"/>
    <property type="project" value="UniProtKB-KW"/>
</dbReference>
<dbReference type="FunFam" id="3.90.209.20:FF:000001">
    <property type="entry name" value="Hemagglutinin"/>
    <property type="match status" value="1"/>
</dbReference>
<dbReference type="Gene3D" id="3.90.20.10">
    <property type="match status" value="1"/>
</dbReference>
<dbReference type="Gene3D" id="3.90.209.20">
    <property type="match status" value="1"/>
</dbReference>
<dbReference type="HAMAP" id="MF_04072">
    <property type="entry name" value="INFV_HEMA"/>
    <property type="match status" value="1"/>
</dbReference>
<dbReference type="InterPro" id="IPR008980">
    <property type="entry name" value="Capsid_hemagglutn"/>
</dbReference>
<dbReference type="InterPro" id="IPR013828">
    <property type="entry name" value="Hemagglutn_HA1_a/b_dom_sf"/>
</dbReference>
<dbReference type="InterPro" id="IPR000149">
    <property type="entry name" value="Hemagglutn_influenz_A"/>
</dbReference>
<dbReference type="InterPro" id="IPR001364">
    <property type="entry name" value="Hemagglutn_influenz_A/B"/>
</dbReference>
<dbReference type="Pfam" id="PF00509">
    <property type="entry name" value="Hemagglutinin"/>
    <property type="match status" value="1"/>
</dbReference>
<dbReference type="PRINTS" id="PR00330">
    <property type="entry name" value="HEMAGGLUTN1"/>
</dbReference>
<dbReference type="PRINTS" id="PR00329">
    <property type="entry name" value="HEMAGGLUTN12"/>
</dbReference>
<dbReference type="SUPFAM" id="SSF58064">
    <property type="entry name" value="Influenza hemagglutinin (stalk)"/>
    <property type="match status" value="1"/>
</dbReference>
<dbReference type="SUPFAM" id="SSF49818">
    <property type="entry name" value="Viral protein domain"/>
    <property type="match status" value="1"/>
</dbReference>
<feature type="chain" id="PRO_0000440823" description="Hemagglutinin HA1 chain" evidence="1">
    <location>
        <begin position="1"/>
        <end position="338"/>
    </location>
</feature>
<feature type="chain" id="PRO_0000440824" description="Hemagglutinin HA2 chain" evidence="1">
    <location>
        <begin position="339"/>
        <end position="559"/>
    </location>
</feature>
<feature type="topological domain" description="Extracellular" evidence="1">
    <location>
        <begin position="1"/>
        <end position="523"/>
    </location>
</feature>
<feature type="transmembrane region" description="Helical" evidence="1">
    <location>
        <begin position="524"/>
        <end position="544"/>
    </location>
</feature>
<feature type="topological domain" description="Cytoplasmic" evidence="1">
    <location>
        <begin position="545"/>
        <end position="559"/>
    </location>
</feature>
<feature type="site" description="Cleavage; by host" evidence="1">
    <location>
        <begin position="338"/>
        <end position="339"/>
    </location>
</feature>
<feature type="lipid moiety-binding region" description="S-palmitoyl cysteine; by host" evidence="1">
    <location>
        <position position="549"/>
    </location>
</feature>
<feature type="lipid moiety-binding region" description="S-palmitoyl cysteine; by host" evidence="1">
    <location>
        <position position="556"/>
    </location>
</feature>
<feature type="lipid moiety-binding region" description="S-palmitoyl cysteine; by host" evidence="1">
    <location>
        <position position="559"/>
    </location>
</feature>
<feature type="glycosylation site" description="N-linked (GlcNAc...) asparagine; by host" evidence="1">
    <location>
        <position position="18"/>
    </location>
</feature>
<feature type="glycosylation site" description="N-linked (GlcNAc...) asparagine; by host" evidence="1">
    <location>
        <position position="19"/>
    </location>
</feature>
<feature type="glycosylation site" description="N-linked (GlcNAc...) asparagine; by host" evidence="1">
    <location>
        <position position="31"/>
    </location>
</feature>
<feature type="glycosylation site" description="N-linked (GlcNAc...) asparagine; by host" evidence="1">
    <location>
        <position position="162"/>
    </location>
</feature>
<feature type="glycosylation site" description="N-linked (GlcNAc...) asparagine; by host" evidence="1">
    <location>
        <position position="294"/>
    </location>
</feature>
<feature type="glycosylation site" description="N-linked (GlcNAc...) asparagine; by host" evidence="1">
    <location>
        <position position="492"/>
    </location>
</feature>
<feature type="disulfide bond" description="Interchain (between HA1 and HA2 chains)" evidence="1">
    <location>
        <begin position="12"/>
        <end position="475"/>
    </location>
</feature>
<feature type="disulfide bond" evidence="1">
    <location>
        <begin position="50"/>
        <end position="282"/>
    </location>
</feature>
<feature type="disulfide bond" evidence="1">
    <location>
        <begin position="63"/>
        <end position="75"/>
    </location>
</feature>
<feature type="disulfide bond" evidence="1">
    <location>
        <begin position="98"/>
        <end position="143"/>
    </location>
</feature>
<feature type="disulfide bond" evidence="1">
    <location>
        <begin position="286"/>
        <end position="310"/>
    </location>
</feature>
<feature type="disulfide bond" evidence="1">
    <location>
        <begin position="482"/>
        <end position="486"/>
    </location>
</feature>
<feature type="non-terminal residue">
    <location>
        <position position="1"/>
    </location>
</feature>
<feature type="non-terminal residue">
    <location>
        <position position="559"/>
    </location>
</feature>
<feature type="turn" evidence="2">
    <location>
        <begin position="344"/>
        <end position="347"/>
    </location>
</feature>
<feature type="strand" evidence="2">
    <location>
        <begin position="359"/>
        <end position="366"/>
    </location>
</feature>
<feature type="strand" evidence="2">
    <location>
        <begin position="369"/>
        <end position="374"/>
    </location>
</feature>
<feature type="helix" evidence="2">
    <location>
        <begin position="376"/>
        <end position="395"/>
    </location>
</feature>
<feature type="helix" evidence="2">
    <location>
        <begin position="410"/>
        <end position="412"/>
    </location>
</feature>
<feature type="helix" evidence="2">
    <location>
        <begin position="413"/>
        <end position="463"/>
    </location>
</feature>
<feature type="strand" evidence="2">
    <location>
        <begin position="464"/>
        <end position="470"/>
    </location>
</feature>
<feature type="strand" evidence="2">
    <location>
        <begin position="472"/>
        <end position="480"/>
    </location>
</feature>
<feature type="helix" evidence="2">
    <location>
        <begin position="485"/>
        <end position="487"/>
    </location>
</feature>
<feature type="helix" evidence="2">
    <location>
        <begin position="488"/>
        <end position="492"/>
    </location>
</feature>
<feature type="helix" evidence="2">
    <location>
        <begin position="497"/>
        <end position="506"/>
    </location>
</feature>
<feature type="turn" evidence="2">
    <location>
        <begin position="507"/>
        <end position="510"/>
    </location>
</feature>
<proteinExistence type="evidence at protein level"/>
<comment type="function">
    <text evidence="1">Binds to sialic acid-containing receptors on the cell surface, bringing about the attachment of the virus particle to the cell. This attachment induces virion internalization either through clathrin-dependent endocytosis or through clathrin- and caveolin-independent pathway. Plays a major role in the determination of host range restriction and virulence. Class I viral fusion protein. Responsible for penetration of the virus into the cell cytoplasm by mediating the fusion of the membrane of the endocytosed virus particle with the endosomal membrane. Low pH in endosomes induces an irreversible conformational change in HA2, releasing the fusion hydrophobic peptide. Several trimers are required to form a competent fusion pore.</text>
</comment>
<comment type="subunit">
    <text evidence="1">Homotrimer of disulfide-linked HA1-HA2.</text>
</comment>
<comment type="subcellular location">
    <subcellularLocation>
        <location evidence="1">Virion membrane</location>
        <topology evidence="1">Single-pass type I membrane protein</topology>
    </subcellularLocation>
    <subcellularLocation>
        <location evidence="1">Host apical cell membrane</location>
        <topology evidence="1">Single-pass type I membrane protein</topology>
    </subcellularLocation>
    <text evidence="1">Targeted to the apical plasma membrane in epithelial polarized cells through a signal present in the transmembrane domain. Associated with glycosphingolipid- and cholesterol-enriched detergent-resistant lipid rafts.</text>
</comment>
<comment type="PTM">
    <text evidence="1">Palmitoylated.</text>
</comment>
<comment type="PTM">
    <text evidence="1">In natural infection, inactive HA is matured into HA1 and HA2 outside the cell by one or more trypsin-like, arginine-specific endoprotease secreted by the bronchial epithelial cells. One identified protease that may be involved in this process is secreted in lungs by club cells.</text>
</comment>
<comment type="miscellaneous">
    <text>Major glycoprotein, comprises over 80% of the envelope proteins present in virus particle.</text>
</comment>
<comment type="miscellaneous">
    <text>The extent of infection into host organism is determined by HA. Influenza viruses bud from the apical surface of polarized epithelial cells (e.g. bronchial epithelial cells) into lumen of lungs and are therefore usually pneumotropic. The reason is that HA is cleaved by tryptase clara which is restricted to lungs. However, HAs of H5 and H7 pantropic avian viruses subtypes can be cleaved by furin and subtilisin-type enzymes, allowing the virus to grow in other organs than lungs.</text>
</comment>
<comment type="miscellaneous">
    <text>The influenza A genome consist of 8 RNA segments. Genetic variation of hemagglutinin and/or neuraminidase genes results in the emergence of new influenza strains. The mechanism of variation can be the result of point mutations or the result of genetic reassortment between segments of two different strains.</text>
</comment>
<comment type="similarity">
    <text evidence="1">Belongs to the influenza viruses hemagglutinin family.</text>
</comment>
<evidence type="ECO:0000255" key="1">
    <source>
        <dbReference type="HAMAP-Rule" id="MF_04072"/>
    </source>
</evidence>
<evidence type="ECO:0007829" key="2">
    <source>
        <dbReference type="PDB" id="6E7G"/>
    </source>
</evidence>
<gene>
    <name evidence="1" type="primary">HA</name>
</gene>
<accession>Q6DQ18</accession>
<protein>
    <recommendedName>
        <fullName evidence="1">Hemagglutinin</fullName>
    </recommendedName>
    <component>
        <recommendedName>
            <fullName evidence="1">Hemagglutinin HA1 chain</fullName>
        </recommendedName>
    </component>
    <component>
        <recommendedName>
            <fullName evidence="1">Hemagglutinin HA2 chain</fullName>
        </recommendedName>
    </component>
</protein>